<organism evidence="7">
    <name type="scientific">Phlebotomus papatasi</name>
    <name type="common">Sandfly</name>
    <dbReference type="NCBI Taxonomy" id="29031"/>
    <lineage>
        <taxon>Eukaryota</taxon>
        <taxon>Metazoa</taxon>
        <taxon>Ecdysozoa</taxon>
        <taxon>Arthropoda</taxon>
        <taxon>Hexapoda</taxon>
        <taxon>Insecta</taxon>
        <taxon>Pterygota</taxon>
        <taxon>Neoptera</taxon>
        <taxon>Endopterygota</taxon>
        <taxon>Diptera</taxon>
        <taxon>Nematocera</taxon>
        <taxon>Psychodoidea</taxon>
        <taxon>Psychodidae</taxon>
        <taxon>Phlebotomus</taxon>
        <taxon>Phlebotomus</taxon>
    </lineage>
</organism>
<dbReference type="EMBL" id="JQ988883">
    <property type="protein sequence ID" value="AGE83092.1"/>
    <property type="molecule type" value="mRNA"/>
</dbReference>
<dbReference type="SMR" id="M1JMQ7"/>
<dbReference type="VEuPathDB" id="VectorBase:PPAI003080"/>
<dbReference type="VEuPathDB" id="VectorBase:PPAPM1_003242"/>
<dbReference type="Proteomes" id="UP000092462">
    <property type="component" value="Unplaced"/>
</dbReference>
<dbReference type="GO" id="GO:0005576">
    <property type="term" value="C:extracellular region"/>
    <property type="evidence" value="ECO:0007669"/>
    <property type="project" value="UniProtKB-SubCell"/>
</dbReference>
<dbReference type="GO" id="GO:0005549">
    <property type="term" value="F:odorant binding"/>
    <property type="evidence" value="ECO:0007669"/>
    <property type="project" value="InterPro"/>
</dbReference>
<dbReference type="GO" id="GO:0090729">
    <property type="term" value="F:toxin activity"/>
    <property type="evidence" value="ECO:0007669"/>
    <property type="project" value="UniProtKB-KW"/>
</dbReference>
<dbReference type="CDD" id="cd23992">
    <property type="entry name" value="PBP_GOBP"/>
    <property type="match status" value="1"/>
</dbReference>
<dbReference type="Gene3D" id="1.10.238.20">
    <property type="entry name" value="Pheromone/general odorant binding protein domain"/>
    <property type="match status" value="1"/>
</dbReference>
<dbReference type="InterPro" id="IPR006170">
    <property type="entry name" value="PBP/GOBP"/>
</dbReference>
<dbReference type="InterPro" id="IPR036728">
    <property type="entry name" value="PBP_GOBP_sf"/>
</dbReference>
<dbReference type="Pfam" id="PF01395">
    <property type="entry name" value="PBP_GOBP"/>
    <property type="match status" value="1"/>
</dbReference>
<dbReference type="SUPFAM" id="SSF47565">
    <property type="entry name" value="Insect pheromone/odorant-binding proteins"/>
    <property type="match status" value="1"/>
</dbReference>
<reference evidence="7" key="1">
    <citation type="journal article" date="2012" name="PLoS ONE">
        <title>Updating the salivary gland transcriptome of Phlebotomus papatasi (Tunisian strain): the search for sand fly-secreted immunogenic proteins for humans.</title>
        <authorList>
            <person name="Abdeladhim M."/>
            <person name="Jochim R.C."/>
            <person name="Ben Ahmed M."/>
            <person name="Zhioua E."/>
            <person name="Chelbi I."/>
            <person name="Cherni S."/>
            <person name="Louzir H."/>
            <person name="Ribeiro J.M."/>
            <person name="Valenzuela J.G."/>
        </authorList>
    </citation>
    <scope>NUCLEOTIDE SEQUENCE [LARGE SCALE MRNA]</scope>
    <source>
        <tissue evidence="7">Salivary gland</tissue>
    </source>
</reference>
<reference evidence="6" key="2">
    <citation type="journal article" date="2019" name="Sci. Rep.">
        <title>Functional and structural similarities of D7 proteins in the independently-evolved salivary secretions of sand flies and mosquitoes.</title>
        <authorList>
            <person name="Jablonka W."/>
            <person name="Kim I.H."/>
            <person name="Alvarenga P.H."/>
            <person name="Valenzuela J.G."/>
            <person name="Ribeiro J.M.C."/>
            <person name="Andersen J.F."/>
        </authorList>
    </citation>
    <scope>FUNCTION</scope>
</reference>
<name>D7LC_PHLPP</name>
<keyword id="KW-1015">Disulfide bond</keyword>
<keyword id="KW-1199">Hemostasis impairing toxin</keyword>
<keyword id="KW-1201">Platelet aggregation inhibiting toxin</keyword>
<keyword id="KW-0964">Secreted</keyword>
<keyword id="KW-0732">Signal</keyword>
<keyword id="KW-0800">Toxin</keyword>
<sequence length="254" mass="29266">MNAVITSLLFLSLVGLGYSWKYPRNADQTLWAFRTCQRRESDNNILKKWYTWELPNDEKTHCYVKCVWIHLGLYSKSKKSLRVNKIEKQFTSRGVAIPSDLKSMEGETDGSCKAIYDKTISFFNNNVADLRTAFYGTIEESNKWYSENPDAKPKGTKISKFCKDNNREQGESNCKHACSAYYYRLVDEDFEPIYFRLLEIKGFSNEDIDECIKQTSGRQGCQSSDALYDCLKNKNSAALKAALQILDDQSARTY</sequence>
<comment type="function">
    <text evidence="1 5">Modulates blood feeding of female sandflies on vertebrate species by binding and sequestering different mediators involved in the host response (By similarity). Binds leukotriene C4, leukotriene D4, leukotriene E4 and U-46619, a stable analog of thromboxane A2 (PubMed:30926880). Does not bind histamine or serotonin (PubMed:30926880). Inhibits platelet aggregation induced by low concentrations of collagen in thromboxane A2-dependent manner (PubMed:30926880).</text>
</comment>
<comment type="subcellular location">
    <subcellularLocation>
        <location evidence="1">Secreted</location>
    </subcellularLocation>
</comment>
<comment type="similarity">
    <text evidence="6">Belongs to the PBP/GOBP family.</text>
</comment>
<gene>
    <name evidence="6" type="primary">D7LC</name>
</gene>
<evidence type="ECO:0000250" key="1">
    <source>
        <dbReference type="UniProtKB" id="P18153"/>
    </source>
</evidence>
<evidence type="ECO:0000250" key="2">
    <source>
        <dbReference type="UniProtKB" id="Q06KA2"/>
    </source>
</evidence>
<evidence type="ECO:0000250" key="3">
    <source>
        <dbReference type="UniProtKB" id="Q95NY5"/>
    </source>
</evidence>
<evidence type="ECO:0000255" key="4"/>
<evidence type="ECO:0000269" key="5">
    <source>
    </source>
</evidence>
<evidence type="ECO:0000305" key="6"/>
<evidence type="ECO:0000312" key="7">
    <source>
        <dbReference type="EMBL" id="AGE83092.1"/>
    </source>
</evidence>
<accession>M1JMQ7</accession>
<feature type="signal peptide" evidence="4">
    <location>
        <begin position="1"/>
        <end position="19"/>
    </location>
</feature>
<feature type="chain" id="PRO_5004015145" description="Long form salivary protein D7LC" evidence="4">
    <location>
        <begin position="20"/>
        <end position="254"/>
    </location>
</feature>
<feature type="binding site" evidence="3">
    <location>
        <position position="49"/>
    </location>
    <ligand>
        <name>thromboxane A2</name>
        <dbReference type="ChEBI" id="CHEBI:57445"/>
    </ligand>
</feature>
<feature type="binding site" evidence="3">
    <location>
        <position position="52"/>
    </location>
    <ligand>
        <name>leukotriene C4</name>
        <dbReference type="ChEBI" id="CHEBI:57973"/>
    </ligand>
</feature>
<feature type="binding site" evidence="3">
    <location>
        <position position="63"/>
    </location>
    <ligand>
        <name>thromboxane A2</name>
        <dbReference type="ChEBI" id="CHEBI:57445"/>
    </ligand>
</feature>
<feature type="binding site" evidence="3">
    <location>
        <position position="136"/>
    </location>
    <ligand>
        <name>leukotriene C4</name>
        <dbReference type="ChEBI" id="CHEBI:57973"/>
    </ligand>
</feature>
<feature type="binding site" evidence="3">
    <location>
        <position position="154"/>
    </location>
    <ligand>
        <name>leukotriene C4</name>
        <dbReference type="ChEBI" id="CHEBI:57973"/>
    </ligand>
</feature>
<feature type="binding site" evidence="3">
    <location>
        <position position="154"/>
    </location>
    <ligand>
        <name>thromboxane A2</name>
        <dbReference type="ChEBI" id="CHEBI:57445"/>
    </ligand>
</feature>
<feature type="disulfide bond" evidence="2">
    <location>
        <begin position="36"/>
        <end position="66"/>
    </location>
</feature>
<feature type="disulfide bond" evidence="2">
    <location>
        <begin position="62"/>
        <end position="112"/>
    </location>
</feature>
<feature type="disulfide bond" evidence="2">
    <location>
        <begin position="162"/>
        <end position="178"/>
    </location>
</feature>
<feature type="disulfide bond" evidence="2">
    <location>
        <begin position="174"/>
        <end position="221"/>
    </location>
</feature>
<feature type="disulfide bond" evidence="2">
    <location>
        <begin position="211"/>
        <end position="230"/>
    </location>
</feature>
<protein>
    <recommendedName>
        <fullName evidence="6">Long form salivary protein D7LC</fullName>
    </recommendedName>
    <alternativeName>
        <fullName evidence="7">SP28c</fullName>
    </alternativeName>
</protein>
<proteinExistence type="evidence at transcript level"/>